<organism>
    <name type="scientific">Xylella fastidiosa (strain Temecula1 / ATCC 700964)</name>
    <dbReference type="NCBI Taxonomy" id="183190"/>
    <lineage>
        <taxon>Bacteria</taxon>
        <taxon>Pseudomonadati</taxon>
        <taxon>Pseudomonadota</taxon>
        <taxon>Gammaproteobacteria</taxon>
        <taxon>Lysobacterales</taxon>
        <taxon>Lysobacteraceae</taxon>
        <taxon>Xylella</taxon>
    </lineage>
</organism>
<name>UVRB_XYLFT</name>
<proteinExistence type="inferred from homology"/>
<sequence>MTGLFQLVSSYSPSGDQPAAVQKLVTNFHAGIAKQVLLGVTGSGKTYTIANVVEQIQKPTLVMAPNKTLAAQLYGEFKAFFPHNAVEYFVSYYDYYQPEAYVPASDTFIEKDSSINEYIEQMRLAATKALLSRSDVLVVATVSAIYGLGAPEDYLSLRLILSLGEHIEQRQLIRHLTELQYTRNELDLVRGSFRVRGEVVDVFPAESEMEALRIELFDGEIESLSLFDPLTGQTVRKLQRFSVYPKTHYATTRERTLSAVDTIKDELKEYLELLYGRNKLVEAQRLAQRTQFDLEMMAEVGYCNGIENYSRHLTGKAPGEPPPTLFDYLPPDALLVIDESHVTIPQIGAMFKGDRSRKETLVEFGFRLPSALDNRPLRFEEWEVRSPRSIYVSATPGSYEFRESAGEVIELLVRPTGLIDPEIEIRPVATQVDDLISQINACIKLGDRVLVTTLTKRMAENLTEYLSEQGIRIRYLHSEIDTVERVEIIRDLRLGKFDVLVGINLLREGLDMPEVSLVAILDADKEGFLRSTSSLIQTIGRAARSVRGRAILYADKVTRSMRAAIDETERRRQKQKEYNAENGIVPKSVVRPISDILEGARDGVEVKSKGKGRRVDEVPADYGALNQAEIAAQMKVLEQKMYQHARDLEFEDAARIRDQIQRLREAGLG</sequence>
<comment type="function">
    <text evidence="1">The UvrABC repair system catalyzes the recognition and processing of DNA lesions. A damage recognition complex composed of 2 UvrA and 2 UvrB subunits scans DNA for abnormalities. Upon binding of the UvrA(2)B(2) complex to a putative damaged site, the DNA wraps around one UvrB monomer. DNA wrap is dependent on ATP binding by UvrB and probably causes local melting of the DNA helix, facilitating insertion of UvrB beta-hairpin between the DNA strands. Then UvrB probes one DNA strand for the presence of a lesion. If a lesion is found the UvrA subunits dissociate and the UvrB-DNA preincision complex is formed. This complex is subsequently bound by UvrC and the second UvrB is released. If no lesion is found, the DNA wraps around the other UvrB subunit that will check the other stand for damage.</text>
</comment>
<comment type="subunit">
    <text evidence="1">Forms a heterotetramer with UvrA during the search for lesions. Interacts with UvrC in an incision complex.</text>
</comment>
<comment type="subcellular location">
    <subcellularLocation>
        <location evidence="1">Cytoplasm</location>
    </subcellularLocation>
</comment>
<comment type="domain">
    <text evidence="1">The beta-hairpin motif is involved in DNA binding.</text>
</comment>
<comment type="similarity">
    <text evidence="1">Belongs to the UvrB family.</text>
</comment>
<accession>Q87AT6</accession>
<evidence type="ECO:0000255" key="1">
    <source>
        <dbReference type="HAMAP-Rule" id="MF_00204"/>
    </source>
</evidence>
<gene>
    <name evidence="1" type="primary">uvrB</name>
    <name type="ordered locus">PD_1734</name>
</gene>
<protein>
    <recommendedName>
        <fullName evidence="1">UvrABC system protein B</fullName>
        <shortName evidence="1">Protein UvrB</shortName>
    </recommendedName>
    <alternativeName>
        <fullName evidence="1">Excinuclease ABC subunit B</fullName>
    </alternativeName>
</protein>
<dbReference type="EMBL" id="AE009442">
    <property type="protein sequence ID" value="AAO29570.1"/>
    <property type="molecule type" value="Genomic_DNA"/>
</dbReference>
<dbReference type="RefSeq" id="WP_004089700.1">
    <property type="nucleotide sequence ID" value="NC_004556.1"/>
</dbReference>
<dbReference type="SMR" id="Q87AT6"/>
<dbReference type="GeneID" id="93905579"/>
<dbReference type="KEGG" id="xft:PD_1734"/>
<dbReference type="HOGENOM" id="CLU_009621_2_1_6"/>
<dbReference type="Proteomes" id="UP000002516">
    <property type="component" value="Chromosome"/>
</dbReference>
<dbReference type="GO" id="GO:0005737">
    <property type="term" value="C:cytoplasm"/>
    <property type="evidence" value="ECO:0007669"/>
    <property type="project" value="UniProtKB-SubCell"/>
</dbReference>
<dbReference type="GO" id="GO:0009380">
    <property type="term" value="C:excinuclease repair complex"/>
    <property type="evidence" value="ECO:0007669"/>
    <property type="project" value="InterPro"/>
</dbReference>
<dbReference type="GO" id="GO:0005524">
    <property type="term" value="F:ATP binding"/>
    <property type="evidence" value="ECO:0007669"/>
    <property type="project" value="UniProtKB-UniRule"/>
</dbReference>
<dbReference type="GO" id="GO:0016887">
    <property type="term" value="F:ATP hydrolysis activity"/>
    <property type="evidence" value="ECO:0007669"/>
    <property type="project" value="InterPro"/>
</dbReference>
<dbReference type="GO" id="GO:0003677">
    <property type="term" value="F:DNA binding"/>
    <property type="evidence" value="ECO:0007669"/>
    <property type="project" value="UniProtKB-UniRule"/>
</dbReference>
<dbReference type="GO" id="GO:0009381">
    <property type="term" value="F:excinuclease ABC activity"/>
    <property type="evidence" value="ECO:0007669"/>
    <property type="project" value="UniProtKB-UniRule"/>
</dbReference>
<dbReference type="GO" id="GO:0006289">
    <property type="term" value="P:nucleotide-excision repair"/>
    <property type="evidence" value="ECO:0007669"/>
    <property type="project" value="UniProtKB-UniRule"/>
</dbReference>
<dbReference type="GO" id="GO:0009432">
    <property type="term" value="P:SOS response"/>
    <property type="evidence" value="ECO:0007669"/>
    <property type="project" value="UniProtKB-UniRule"/>
</dbReference>
<dbReference type="CDD" id="cd17916">
    <property type="entry name" value="DEXHc_UvrB"/>
    <property type="match status" value="1"/>
</dbReference>
<dbReference type="CDD" id="cd18790">
    <property type="entry name" value="SF2_C_UvrB"/>
    <property type="match status" value="1"/>
</dbReference>
<dbReference type="FunFam" id="3.40.50.300:FF:000477">
    <property type="entry name" value="UvrABC system protein B"/>
    <property type="match status" value="1"/>
</dbReference>
<dbReference type="Gene3D" id="3.40.50.300">
    <property type="entry name" value="P-loop containing nucleotide triphosphate hydrolases"/>
    <property type="match status" value="3"/>
</dbReference>
<dbReference type="Gene3D" id="4.10.860.10">
    <property type="entry name" value="UVR domain"/>
    <property type="match status" value="1"/>
</dbReference>
<dbReference type="HAMAP" id="MF_00204">
    <property type="entry name" value="UvrB"/>
    <property type="match status" value="1"/>
</dbReference>
<dbReference type="InterPro" id="IPR006935">
    <property type="entry name" value="Helicase/UvrB_N"/>
</dbReference>
<dbReference type="InterPro" id="IPR014001">
    <property type="entry name" value="Helicase_ATP-bd"/>
</dbReference>
<dbReference type="InterPro" id="IPR001650">
    <property type="entry name" value="Helicase_C-like"/>
</dbReference>
<dbReference type="InterPro" id="IPR027417">
    <property type="entry name" value="P-loop_NTPase"/>
</dbReference>
<dbReference type="InterPro" id="IPR001943">
    <property type="entry name" value="UVR_dom"/>
</dbReference>
<dbReference type="InterPro" id="IPR036876">
    <property type="entry name" value="UVR_dom_sf"/>
</dbReference>
<dbReference type="InterPro" id="IPR004807">
    <property type="entry name" value="UvrB"/>
</dbReference>
<dbReference type="InterPro" id="IPR041471">
    <property type="entry name" value="UvrB_inter"/>
</dbReference>
<dbReference type="InterPro" id="IPR024759">
    <property type="entry name" value="UvrB_YAD/RRR_dom"/>
</dbReference>
<dbReference type="NCBIfam" id="NF003673">
    <property type="entry name" value="PRK05298.1"/>
    <property type="match status" value="1"/>
</dbReference>
<dbReference type="NCBIfam" id="TIGR00631">
    <property type="entry name" value="uvrb"/>
    <property type="match status" value="1"/>
</dbReference>
<dbReference type="PANTHER" id="PTHR24029">
    <property type="entry name" value="UVRABC SYSTEM PROTEIN B"/>
    <property type="match status" value="1"/>
</dbReference>
<dbReference type="PANTHER" id="PTHR24029:SF0">
    <property type="entry name" value="UVRABC SYSTEM PROTEIN B"/>
    <property type="match status" value="1"/>
</dbReference>
<dbReference type="Pfam" id="PF00271">
    <property type="entry name" value="Helicase_C"/>
    <property type="match status" value="1"/>
</dbReference>
<dbReference type="Pfam" id="PF04851">
    <property type="entry name" value="ResIII"/>
    <property type="match status" value="1"/>
</dbReference>
<dbReference type="Pfam" id="PF02151">
    <property type="entry name" value="UVR"/>
    <property type="match status" value="1"/>
</dbReference>
<dbReference type="Pfam" id="PF12344">
    <property type="entry name" value="UvrB"/>
    <property type="match status" value="1"/>
</dbReference>
<dbReference type="Pfam" id="PF17757">
    <property type="entry name" value="UvrB_inter"/>
    <property type="match status" value="1"/>
</dbReference>
<dbReference type="SMART" id="SM00487">
    <property type="entry name" value="DEXDc"/>
    <property type="match status" value="1"/>
</dbReference>
<dbReference type="SMART" id="SM00490">
    <property type="entry name" value="HELICc"/>
    <property type="match status" value="1"/>
</dbReference>
<dbReference type="SUPFAM" id="SSF46600">
    <property type="entry name" value="C-terminal UvrC-binding domain of UvrB"/>
    <property type="match status" value="1"/>
</dbReference>
<dbReference type="SUPFAM" id="SSF52540">
    <property type="entry name" value="P-loop containing nucleoside triphosphate hydrolases"/>
    <property type="match status" value="2"/>
</dbReference>
<dbReference type="PROSITE" id="PS51192">
    <property type="entry name" value="HELICASE_ATP_BIND_1"/>
    <property type="match status" value="1"/>
</dbReference>
<dbReference type="PROSITE" id="PS51194">
    <property type="entry name" value="HELICASE_CTER"/>
    <property type="match status" value="1"/>
</dbReference>
<dbReference type="PROSITE" id="PS50151">
    <property type="entry name" value="UVR"/>
    <property type="match status" value="1"/>
</dbReference>
<keyword id="KW-0067">ATP-binding</keyword>
<keyword id="KW-0963">Cytoplasm</keyword>
<keyword id="KW-0227">DNA damage</keyword>
<keyword id="KW-0228">DNA excision</keyword>
<keyword id="KW-0234">DNA repair</keyword>
<keyword id="KW-0267">Excision nuclease</keyword>
<keyword id="KW-0547">Nucleotide-binding</keyword>
<keyword id="KW-1185">Reference proteome</keyword>
<keyword id="KW-0742">SOS response</keyword>
<feature type="chain" id="PRO_0000138450" description="UvrABC system protein B">
    <location>
        <begin position="1"/>
        <end position="669"/>
    </location>
</feature>
<feature type="domain" description="Helicase ATP-binding" evidence="1">
    <location>
        <begin position="26"/>
        <end position="414"/>
    </location>
</feature>
<feature type="domain" description="Helicase C-terminal" evidence="1">
    <location>
        <begin position="431"/>
        <end position="597"/>
    </location>
</feature>
<feature type="domain" description="UVR" evidence="1">
    <location>
        <begin position="631"/>
        <end position="666"/>
    </location>
</feature>
<feature type="short sequence motif" description="Beta-hairpin">
    <location>
        <begin position="92"/>
        <end position="115"/>
    </location>
</feature>
<feature type="binding site" evidence="1">
    <location>
        <begin position="39"/>
        <end position="46"/>
    </location>
    <ligand>
        <name>ATP</name>
        <dbReference type="ChEBI" id="CHEBI:30616"/>
    </ligand>
</feature>
<reference key="1">
    <citation type="journal article" date="2003" name="J. Bacteriol.">
        <title>Comparative analyses of the complete genome sequences of Pierce's disease and citrus variegated chlorosis strains of Xylella fastidiosa.</title>
        <authorList>
            <person name="Van Sluys M.A."/>
            <person name="de Oliveira M.C."/>
            <person name="Monteiro-Vitorello C.B."/>
            <person name="Miyaki C.Y."/>
            <person name="Furlan L.R."/>
            <person name="Camargo L.E.A."/>
            <person name="da Silva A.C.R."/>
            <person name="Moon D.H."/>
            <person name="Takita M.A."/>
            <person name="Lemos E.G.M."/>
            <person name="Machado M.A."/>
            <person name="Ferro M.I.T."/>
            <person name="da Silva F.R."/>
            <person name="Goldman M.H.S."/>
            <person name="Goldman G.H."/>
            <person name="Lemos M.V.F."/>
            <person name="El-Dorry H."/>
            <person name="Tsai S.M."/>
            <person name="Carrer H."/>
            <person name="Carraro D.M."/>
            <person name="de Oliveira R.C."/>
            <person name="Nunes L.R."/>
            <person name="Siqueira W.J."/>
            <person name="Coutinho L.L."/>
            <person name="Kimura E.T."/>
            <person name="Ferro E.S."/>
            <person name="Harakava R."/>
            <person name="Kuramae E.E."/>
            <person name="Marino C.L."/>
            <person name="Giglioti E."/>
            <person name="Abreu I.L."/>
            <person name="Alves L.M.C."/>
            <person name="do Amaral A.M."/>
            <person name="Baia G.S."/>
            <person name="Blanco S.R."/>
            <person name="Brito M.S."/>
            <person name="Cannavan F.S."/>
            <person name="Celestino A.V."/>
            <person name="da Cunha A.F."/>
            <person name="Fenille R.C."/>
            <person name="Ferro J.A."/>
            <person name="Formighieri E.F."/>
            <person name="Kishi L.T."/>
            <person name="Leoni S.G."/>
            <person name="Oliveira A.R."/>
            <person name="Rosa V.E. Jr."/>
            <person name="Sassaki F.T."/>
            <person name="Sena J.A.D."/>
            <person name="de Souza A.A."/>
            <person name="Truffi D."/>
            <person name="Tsukumo F."/>
            <person name="Yanai G.M."/>
            <person name="Zaros L.G."/>
            <person name="Civerolo E.L."/>
            <person name="Simpson A.J.G."/>
            <person name="Almeida N.F. Jr."/>
            <person name="Setubal J.C."/>
            <person name="Kitajima J.P."/>
        </authorList>
    </citation>
    <scope>NUCLEOTIDE SEQUENCE [LARGE SCALE GENOMIC DNA]</scope>
    <source>
        <strain>Temecula1 / ATCC 700964</strain>
    </source>
</reference>